<keyword id="KW-0255">Endonuclease</keyword>
<keyword id="KW-0378">Hydrolase</keyword>
<keyword id="KW-0540">Nuclease</keyword>
<keyword id="KW-1185">Reference proteome</keyword>
<keyword id="KW-0694">RNA-binding</keyword>
<keyword id="KW-0819">tRNA processing</keyword>
<sequence>MNKNHLSKRVRLLKINEFFFVFQKPQRIKVHSMTLFSRSNKLNFPRIGLAISKKYIKHSHERNRIKRHVRETFRTHKHNLLSLDFILTVHSKQILSLTNNNLIEELKKLWYHYQNYQQKS</sequence>
<proteinExistence type="inferred from homology"/>
<comment type="function">
    <text evidence="1">RNaseP catalyzes the removal of the 5'-leader sequence from pre-tRNA to produce the mature 5'-terminus. It can also cleave other RNA substrates such as 4.5S RNA. The protein component plays an auxiliary but essential role in vivo by binding to the 5'-leader sequence and broadening the substrate specificity of the ribozyme.</text>
</comment>
<comment type="catalytic activity">
    <reaction evidence="1">
        <text>Endonucleolytic cleavage of RNA, removing 5'-extranucleotides from tRNA precursor.</text>
        <dbReference type="EC" id="3.1.26.5"/>
    </reaction>
</comment>
<comment type="subunit">
    <text evidence="1">Consists of a catalytic RNA component (M1 or rnpB) and a protein subunit.</text>
</comment>
<comment type="similarity">
    <text evidence="1">Belongs to the RnpA family.</text>
</comment>
<protein>
    <recommendedName>
        <fullName evidence="1">Ribonuclease P protein component</fullName>
        <shortName evidence="1">RNase P protein</shortName>
        <shortName evidence="1">RNaseP protein</shortName>
        <ecNumber evidence="1">3.1.26.5</ecNumber>
    </recommendedName>
    <alternativeName>
        <fullName evidence="1">Protein C5</fullName>
    </alternativeName>
</protein>
<gene>
    <name evidence="1" type="primary">rnpA</name>
    <name type="ordered locus">Bfl014</name>
</gene>
<accession>Q7VQV1</accession>
<organism>
    <name type="scientific">Blochmanniella floridana</name>
    <dbReference type="NCBI Taxonomy" id="203907"/>
    <lineage>
        <taxon>Bacteria</taxon>
        <taxon>Pseudomonadati</taxon>
        <taxon>Pseudomonadota</taxon>
        <taxon>Gammaproteobacteria</taxon>
        <taxon>Enterobacterales</taxon>
        <taxon>Enterobacteriaceae</taxon>
        <taxon>ant endosymbionts</taxon>
        <taxon>Candidatus Blochmanniella</taxon>
    </lineage>
</organism>
<name>RNPA_BLOFL</name>
<reference key="1">
    <citation type="journal article" date="2003" name="Proc. Natl. Acad. Sci. U.S.A.">
        <title>The genome sequence of Blochmannia floridanus: comparative analysis of reduced genomes.</title>
        <authorList>
            <person name="Gil R."/>
            <person name="Silva F.J."/>
            <person name="Zientz E."/>
            <person name="Delmotte F."/>
            <person name="Gonzalez-Candelas F."/>
            <person name="Latorre A."/>
            <person name="Rausell C."/>
            <person name="Kamerbeek J."/>
            <person name="Gadau J."/>
            <person name="Hoelldobler B."/>
            <person name="van Ham R.C.H.J."/>
            <person name="Gross R."/>
            <person name="Moya A."/>
        </authorList>
    </citation>
    <scope>NUCLEOTIDE SEQUENCE [LARGE SCALE GENOMIC DNA]</scope>
</reference>
<feature type="chain" id="PRO_0000198442" description="Ribonuclease P protein component">
    <location>
        <begin position="1"/>
        <end position="120"/>
    </location>
</feature>
<evidence type="ECO:0000255" key="1">
    <source>
        <dbReference type="HAMAP-Rule" id="MF_00227"/>
    </source>
</evidence>
<dbReference type="EC" id="3.1.26.5" evidence="1"/>
<dbReference type="EMBL" id="BX248583">
    <property type="protein sequence ID" value="CAD83542.1"/>
    <property type="molecule type" value="Genomic_DNA"/>
</dbReference>
<dbReference type="SMR" id="Q7VQV1"/>
<dbReference type="STRING" id="203907.Bfl014"/>
<dbReference type="KEGG" id="bfl:Bfl014"/>
<dbReference type="eggNOG" id="COG0594">
    <property type="taxonomic scope" value="Bacteria"/>
</dbReference>
<dbReference type="HOGENOM" id="CLU_117179_11_0_6"/>
<dbReference type="OrthoDB" id="9796422at2"/>
<dbReference type="Proteomes" id="UP000002192">
    <property type="component" value="Chromosome"/>
</dbReference>
<dbReference type="GO" id="GO:0030677">
    <property type="term" value="C:ribonuclease P complex"/>
    <property type="evidence" value="ECO:0007669"/>
    <property type="project" value="TreeGrafter"/>
</dbReference>
<dbReference type="GO" id="GO:0042781">
    <property type="term" value="F:3'-tRNA processing endoribonuclease activity"/>
    <property type="evidence" value="ECO:0007669"/>
    <property type="project" value="TreeGrafter"/>
</dbReference>
<dbReference type="GO" id="GO:0004526">
    <property type="term" value="F:ribonuclease P activity"/>
    <property type="evidence" value="ECO:0007669"/>
    <property type="project" value="UniProtKB-UniRule"/>
</dbReference>
<dbReference type="GO" id="GO:0000049">
    <property type="term" value="F:tRNA binding"/>
    <property type="evidence" value="ECO:0007669"/>
    <property type="project" value="UniProtKB-UniRule"/>
</dbReference>
<dbReference type="GO" id="GO:0001682">
    <property type="term" value="P:tRNA 5'-leader removal"/>
    <property type="evidence" value="ECO:0007669"/>
    <property type="project" value="UniProtKB-UniRule"/>
</dbReference>
<dbReference type="Gene3D" id="3.30.230.10">
    <property type="match status" value="1"/>
</dbReference>
<dbReference type="HAMAP" id="MF_00227">
    <property type="entry name" value="RNase_P"/>
    <property type="match status" value="1"/>
</dbReference>
<dbReference type="InterPro" id="IPR020568">
    <property type="entry name" value="Ribosomal_Su5_D2-typ_SF"/>
</dbReference>
<dbReference type="InterPro" id="IPR014721">
    <property type="entry name" value="Ribsml_uS5_D2-typ_fold_subgr"/>
</dbReference>
<dbReference type="InterPro" id="IPR000100">
    <property type="entry name" value="RNase_P"/>
</dbReference>
<dbReference type="NCBIfam" id="TIGR00188">
    <property type="entry name" value="rnpA"/>
    <property type="match status" value="1"/>
</dbReference>
<dbReference type="PANTHER" id="PTHR33992">
    <property type="entry name" value="RIBONUCLEASE P PROTEIN COMPONENT"/>
    <property type="match status" value="1"/>
</dbReference>
<dbReference type="PANTHER" id="PTHR33992:SF1">
    <property type="entry name" value="RIBONUCLEASE P PROTEIN COMPONENT"/>
    <property type="match status" value="1"/>
</dbReference>
<dbReference type="Pfam" id="PF00825">
    <property type="entry name" value="Ribonuclease_P"/>
    <property type="match status" value="1"/>
</dbReference>
<dbReference type="SUPFAM" id="SSF54211">
    <property type="entry name" value="Ribosomal protein S5 domain 2-like"/>
    <property type="match status" value="1"/>
</dbReference>